<evidence type="ECO:0000255" key="1">
    <source>
        <dbReference type="HAMAP-Rule" id="MF_01554"/>
    </source>
</evidence>
<comment type="function">
    <text evidence="1">Catalyzes the conversion of glucosamine-6-phosphate to glucosamine-1-phosphate.</text>
</comment>
<comment type="catalytic activity">
    <reaction evidence="1">
        <text>alpha-D-glucosamine 1-phosphate = D-glucosamine 6-phosphate</text>
        <dbReference type="Rhea" id="RHEA:23424"/>
        <dbReference type="ChEBI" id="CHEBI:58516"/>
        <dbReference type="ChEBI" id="CHEBI:58725"/>
        <dbReference type="EC" id="5.4.2.10"/>
    </reaction>
</comment>
<comment type="cofactor">
    <cofactor evidence="1">
        <name>Mg(2+)</name>
        <dbReference type="ChEBI" id="CHEBI:18420"/>
    </cofactor>
    <text evidence="1">Binds 1 Mg(2+) ion per subunit.</text>
</comment>
<comment type="PTM">
    <text evidence="1">Activated by phosphorylation.</text>
</comment>
<comment type="similarity">
    <text evidence="1">Belongs to the phosphohexose mutase family.</text>
</comment>
<gene>
    <name evidence="1" type="primary">glmM</name>
    <name type="ordered locus">TTE2191</name>
</gene>
<protein>
    <recommendedName>
        <fullName evidence="1">Phosphoglucosamine mutase</fullName>
        <ecNumber evidence="1">5.4.2.10</ecNumber>
    </recommendedName>
</protein>
<accession>Q8R840</accession>
<keyword id="KW-0413">Isomerase</keyword>
<keyword id="KW-0460">Magnesium</keyword>
<keyword id="KW-0479">Metal-binding</keyword>
<keyword id="KW-0597">Phosphoprotein</keyword>
<keyword id="KW-1185">Reference proteome</keyword>
<proteinExistence type="inferred from homology"/>
<name>GLMM_CALS4</name>
<dbReference type="EC" id="5.4.2.10" evidence="1"/>
<dbReference type="EMBL" id="AE008691">
    <property type="protein sequence ID" value="AAM25348.1"/>
    <property type="molecule type" value="Genomic_DNA"/>
</dbReference>
<dbReference type="RefSeq" id="WP_011026272.1">
    <property type="nucleotide sequence ID" value="NC_003869.1"/>
</dbReference>
<dbReference type="SMR" id="Q8R840"/>
<dbReference type="STRING" id="273068.TTE2191"/>
<dbReference type="KEGG" id="tte:TTE2191"/>
<dbReference type="eggNOG" id="COG1109">
    <property type="taxonomic scope" value="Bacteria"/>
</dbReference>
<dbReference type="HOGENOM" id="CLU_016950_7_0_9"/>
<dbReference type="OrthoDB" id="9806956at2"/>
<dbReference type="Proteomes" id="UP000000555">
    <property type="component" value="Chromosome"/>
</dbReference>
<dbReference type="GO" id="GO:0005829">
    <property type="term" value="C:cytosol"/>
    <property type="evidence" value="ECO:0007669"/>
    <property type="project" value="TreeGrafter"/>
</dbReference>
<dbReference type="GO" id="GO:0000287">
    <property type="term" value="F:magnesium ion binding"/>
    <property type="evidence" value="ECO:0007669"/>
    <property type="project" value="UniProtKB-UniRule"/>
</dbReference>
<dbReference type="GO" id="GO:0008966">
    <property type="term" value="F:phosphoglucosamine mutase activity"/>
    <property type="evidence" value="ECO:0007669"/>
    <property type="project" value="UniProtKB-UniRule"/>
</dbReference>
<dbReference type="GO" id="GO:0004615">
    <property type="term" value="F:phosphomannomutase activity"/>
    <property type="evidence" value="ECO:0007669"/>
    <property type="project" value="TreeGrafter"/>
</dbReference>
<dbReference type="GO" id="GO:0005975">
    <property type="term" value="P:carbohydrate metabolic process"/>
    <property type="evidence" value="ECO:0007669"/>
    <property type="project" value="InterPro"/>
</dbReference>
<dbReference type="GO" id="GO:0009252">
    <property type="term" value="P:peptidoglycan biosynthetic process"/>
    <property type="evidence" value="ECO:0007669"/>
    <property type="project" value="TreeGrafter"/>
</dbReference>
<dbReference type="GO" id="GO:0006048">
    <property type="term" value="P:UDP-N-acetylglucosamine biosynthetic process"/>
    <property type="evidence" value="ECO:0007669"/>
    <property type="project" value="TreeGrafter"/>
</dbReference>
<dbReference type="CDD" id="cd05802">
    <property type="entry name" value="GlmM"/>
    <property type="match status" value="1"/>
</dbReference>
<dbReference type="FunFam" id="3.30.310.50:FF:000001">
    <property type="entry name" value="Phosphoglucosamine mutase"/>
    <property type="match status" value="1"/>
</dbReference>
<dbReference type="FunFam" id="3.40.120.10:FF:000001">
    <property type="entry name" value="Phosphoglucosamine mutase"/>
    <property type="match status" value="1"/>
</dbReference>
<dbReference type="FunFam" id="3.40.120.10:FF:000002">
    <property type="entry name" value="Phosphoglucosamine mutase"/>
    <property type="match status" value="1"/>
</dbReference>
<dbReference type="Gene3D" id="3.40.120.10">
    <property type="entry name" value="Alpha-D-Glucose-1,6-Bisphosphate, subunit A, domain 3"/>
    <property type="match status" value="3"/>
</dbReference>
<dbReference type="Gene3D" id="3.30.310.50">
    <property type="entry name" value="Alpha-D-phosphohexomutase, C-terminal domain"/>
    <property type="match status" value="1"/>
</dbReference>
<dbReference type="HAMAP" id="MF_01554_B">
    <property type="entry name" value="GlmM_B"/>
    <property type="match status" value="1"/>
</dbReference>
<dbReference type="InterPro" id="IPR005844">
    <property type="entry name" value="A-D-PHexomutase_a/b/a-I"/>
</dbReference>
<dbReference type="InterPro" id="IPR016055">
    <property type="entry name" value="A-D-PHexomutase_a/b/a-I/II/III"/>
</dbReference>
<dbReference type="InterPro" id="IPR005845">
    <property type="entry name" value="A-D-PHexomutase_a/b/a-II"/>
</dbReference>
<dbReference type="InterPro" id="IPR005846">
    <property type="entry name" value="A-D-PHexomutase_a/b/a-III"/>
</dbReference>
<dbReference type="InterPro" id="IPR005843">
    <property type="entry name" value="A-D-PHexomutase_C"/>
</dbReference>
<dbReference type="InterPro" id="IPR036900">
    <property type="entry name" value="A-D-PHexomutase_C_sf"/>
</dbReference>
<dbReference type="InterPro" id="IPR016066">
    <property type="entry name" value="A-D-PHexomutase_CS"/>
</dbReference>
<dbReference type="InterPro" id="IPR005841">
    <property type="entry name" value="Alpha-D-phosphohexomutase_SF"/>
</dbReference>
<dbReference type="InterPro" id="IPR006352">
    <property type="entry name" value="GlmM_bact"/>
</dbReference>
<dbReference type="InterPro" id="IPR050060">
    <property type="entry name" value="Phosphoglucosamine_mutase"/>
</dbReference>
<dbReference type="NCBIfam" id="TIGR01455">
    <property type="entry name" value="glmM"/>
    <property type="match status" value="1"/>
</dbReference>
<dbReference type="NCBIfam" id="NF008139">
    <property type="entry name" value="PRK10887.1"/>
    <property type="match status" value="1"/>
</dbReference>
<dbReference type="PANTHER" id="PTHR42946:SF1">
    <property type="entry name" value="PHOSPHOGLUCOMUTASE (ALPHA-D-GLUCOSE-1,6-BISPHOSPHATE-DEPENDENT)"/>
    <property type="match status" value="1"/>
</dbReference>
<dbReference type="PANTHER" id="PTHR42946">
    <property type="entry name" value="PHOSPHOHEXOSE MUTASE"/>
    <property type="match status" value="1"/>
</dbReference>
<dbReference type="Pfam" id="PF02878">
    <property type="entry name" value="PGM_PMM_I"/>
    <property type="match status" value="1"/>
</dbReference>
<dbReference type="Pfam" id="PF02879">
    <property type="entry name" value="PGM_PMM_II"/>
    <property type="match status" value="1"/>
</dbReference>
<dbReference type="Pfam" id="PF02880">
    <property type="entry name" value="PGM_PMM_III"/>
    <property type="match status" value="1"/>
</dbReference>
<dbReference type="Pfam" id="PF00408">
    <property type="entry name" value="PGM_PMM_IV"/>
    <property type="match status" value="1"/>
</dbReference>
<dbReference type="PRINTS" id="PR00509">
    <property type="entry name" value="PGMPMM"/>
</dbReference>
<dbReference type="SUPFAM" id="SSF55957">
    <property type="entry name" value="Phosphoglucomutase, C-terminal domain"/>
    <property type="match status" value="1"/>
</dbReference>
<dbReference type="SUPFAM" id="SSF53738">
    <property type="entry name" value="Phosphoglucomutase, first 3 domains"/>
    <property type="match status" value="3"/>
</dbReference>
<dbReference type="PROSITE" id="PS00710">
    <property type="entry name" value="PGM_PMM"/>
    <property type="match status" value="1"/>
</dbReference>
<feature type="chain" id="PRO_0000147989" description="Phosphoglucosamine mutase">
    <location>
        <begin position="1"/>
        <end position="447"/>
    </location>
</feature>
<feature type="active site" description="Phosphoserine intermediate" evidence="1">
    <location>
        <position position="100"/>
    </location>
</feature>
<feature type="binding site" description="via phosphate group" evidence="1">
    <location>
        <position position="100"/>
    </location>
    <ligand>
        <name>Mg(2+)</name>
        <dbReference type="ChEBI" id="CHEBI:18420"/>
    </ligand>
</feature>
<feature type="binding site" evidence="1">
    <location>
        <position position="239"/>
    </location>
    <ligand>
        <name>Mg(2+)</name>
        <dbReference type="ChEBI" id="CHEBI:18420"/>
    </ligand>
</feature>
<feature type="binding site" evidence="1">
    <location>
        <position position="241"/>
    </location>
    <ligand>
        <name>Mg(2+)</name>
        <dbReference type="ChEBI" id="CHEBI:18420"/>
    </ligand>
</feature>
<feature type="binding site" evidence="1">
    <location>
        <position position="243"/>
    </location>
    <ligand>
        <name>Mg(2+)</name>
        <dbReference type="ChEBI" id="CHEBI:18420"/>
    </ligand>
</feature>
<feature type="modified residue" description="Phosphoserine" evidence="1">
    <location>
        <position position="100"/>
    </location>
</feature>
<sequence>MGRLFGTDGVRGIANKELTPQLAFELGRAGAYVLTEGSHRPKVVVGKDSRISSDMLECALIAGLTSLGAEVVSVGIIPTPAVAYLTRLYKADAGVMISASHNPIEYNGIKFFDKFGYKLPDKLEDRIEEIINEKKELPVPTGIGIGRRKESLTSHRDYIEFLKSTIDTDLKGLKIVIDCAYGASSTVAPILFKELGAEVIAYAAELLGEKINVGCGSTHPEKLQQLVVEHKADLGLAFDGDADRLIAVDEKGNIVDGDHIMAICAIDMKSKGKLKHNTVVATVMSNIGFEIALKEHGIKLIRTKVGDRYVLEEMIKGGYSIGGEQSGHIIFIDDNTTGDGEITALKLCSIMKHTGKKLSELASCMTTYPQVLVNAKVKNELKEKYLEDEDIKREIEKLEKEMEGKGRVLIRPSGTEPLIRVMVEGEDYAKISQMAKELADLIERKLN</sequence>
<organism>
    <name type="scientific">Caldanaerobacter subterraneus subsp. tengcongensis (strain DSM 15242 / JCM 11007 / NBRC 100824 / MB4)</name>
    <name type="common">Thermoanaerobacter tengcongensis</name>
    <dbReference type="NCBI Taxonomy" id="273068"/>
    <lineage>
        <taxon>Bacteria</taxon>
        <taxon>Bacillati</taxon>
        <taxon>Bacillota</taxon>
        <taxon>Clostridia</taxon>
        <taxon>Thermoanaerobacterales</taxon>
        <taxon>Thermoanaerobacteraceae</taxon>
        <taxon>Caldanaerobacter</taxon>
    </lineage>
</organism>
<reference key="1">
    <citation type="journal article" date="2002" name="Genome Res.">
        <title>A complete sequence of the T. tengcongensis genome.</title>
        <authorList>
            <person name="Bao Q."/>
            <person name="Tian Y."/>
            <person name="Li W."/>
            <person name="Xu Z."/>
            <person name="Xuan Z."/>
            <person name="Hu S."/>
            <person name="Dong W."/>
            <person name="Yang J."/>
            <person name="Chen Y."/>
            <person name="Xue Y."/>
            <person name="Xu Y."/>
            <person name="Lai X."/>
            <person name="Huang L."/>
            <person name="Dong X."/>
            <person name="Ma Y."/>
            <person name="Ling L."/>
            <person name="Tan H."/>
            <person name="Chen R."/>
            <person name="Wang J."/>
            <person name="Yu J."/>
            <person name="Yang H."/>
        </authorList>
    </citation>
    <scope>NUCLEOTIDE SEQUENCE [LARGE SCALE GENOMIC DNA]</scope>
    <source>
        <strain>DSM 15242 / JCM 11007 / NBRC 100824 / MB4</strain>
    </source>
</reference>